<reference key="1">
    <citation type="submission" date="2000-09" db="EMBL/GenBank/DDBJ databases">
        <title>A GroEL homolog produced by endosymbionts in antlions as a paralytic toxin against insects.</title>
        <authorList>
            <person name="Yoshida N."/>
            <person name="Oeda K."/>
            <person name="Watanabe E."/>
            <person name="Mikami T."/>
            <person name="Fukita Y."/>
            <person name="Nishimura K."/>
            <person name="Komai K."/>
            <person name="Matsuda K."/>
        </authorList>
    </citation>
    <scope>NUCLEOTIDE SEQUENCE [GENOMIC DNA]</scope>
</reference>
<comment type="function">
    <text evidence="1">Together with the chaperonin GroEL, plays an essential role in assisting protein folding. The GroEL-GroES system forms a nano-cage that allows encapsulation of the non-native substrate proteins and provides a physical environment optimized to promote and accelerate protein folding. GroES binds to the apical surface of the GroEL ring, thereby capping the opening of the GroEL channel.</text>
</comment>
<comment type="subunit">
    <text evidence="1">Heptamer of 7 subunits arranged in a ring. Interacts with the chaperonin GroEL.</text>
</comment>
<comment type="subcellular location">
    <subcellularLocation>
        <location evidence="1">Cytoplasm</location>
    </subcellularLocation>
</comment>
<comment type="similarity">
    <text evidence="1">Belongs to the GroES chaperonin family.</text>
</comment>
<accession>Q93FU7</accession>
<proteinExistence type="inferred from homology"/>
<name>CH10_KLEAE</name>
<sequence length="97" mass="10382">MNIRPLHDRVIVKRKEVETKSAGGIVLTGSAAAKSTRGEIIAVGKGHILEKGTVQPLDVKVGDIVIFNDGYGVKSEKIDNEEVLIMSESDILAIVEA</sequence>
<feature type="chain" id="PRO_0000174752" description="Co-chaperonin GroES">
    <location>
        <begin position="1"/>
        <end position="97"/>
    </location>
</feature>
<protein>
    <recommendedName>
        <fullName evidence="1">Co-chaperonin GroES</fullName>
    </recommendedName>
    <alternativeName>
        <fullName evidence="1">10 kDa chaperonin</fullName>
    </alternativeName>
    <alternativeName>
        <fullName evidence="1">Chaperonin-10</fullName>
        <shortName evidence="1">Cpn10</shortName>
    </alternativeName>
</protein>
<evidence type="ECO:0000255" key="1">
    <source>
        <dbReference type="HAMAP-Rule" id="MF_00580"/>
    </source>
</evidence>
<organism>
    <name type="scientific">Klebsiella aerogenes</name>
    <name type="common">Enterobacter aerogenes</name>
    <dbReference type="NCBI Taxonomy" id="548"/>
    <lineage>
        <taxon>Bacteria</taxon>
        <taxon>Pseudomonadati</taxon>
        <taxon>Pseudomonadota</taxon>
        <taxon>Gammaproteobacteria</taxon>
        <taxon>Enterobacterales</taxon>
        <taxon>Enterobacteriaceae</taxon>
        <taxon>Klebsiella/Raoultella group</taxon>
        <taxon>Klebsiella</taxon>
    </lineage>
</organism>
<keyword id="KW-0143">Chaperone</keyword>
<keyword id="KW-0963">Cytoplasm</keyword>
<dbReference type="EMBL" id="AF306522">
    <property type="protein sequence ID" value="AAL09390.1"/>
    <property type="molecule type" value="Genomic_DNA"/>
</dbReference>
<dbReference type="SMR" id="Q93FU7"/>
<dbReference type="STRING" id="548.EAG7_03716"/>
<dbReference type="GO" id="GO:0005737">
    <property type="term" value="C:cytoplasm"/>
    <property type="evidence" value="ECO:0007669"/>
    <property type="project" value="UniProtKB-SubCell"/>
</dbReference>
<dbReference type="GO" id="GO:0005524">
    <property type="term" value="F:ATP binding"/>
    <property type="evidence" value="ECO:0007669"/>
    <property type="project" value="InterPro"/>
</dbReference>
<dbReference type="GO" id="GO:0046872">
    <property type="term" value="F:metal ion binding"/>
    <property type="evidence" value="ECO:0007669"/>
    <property type="project" value="TreeGrafter"/>
</dbReference>
<dbReference type="GO" id="GO:0044183">
    <property type="term" value="F:protein folding chaperone"/>
    <property type="evidence" value="ECO:0007669"/>
    <property type="project" value="InterPro"/>
</dbReference>
<dbReference type="GO" id="GO:0051087">
    <property type="term" value="F:protein-folding chaperone binding"/>
    <property type="evidence" value="ECO:0007669"/>
    <property type="project" value="TreeGrafter"/>
</dbReference>
<dbReference type="GO" id="GO:0051082">
    <property type="term" value="F:unfolded protein binding"/>
    <property type="evidence" value="ECO:0007669"/>
    <property type="project" value="TreeGrafter"/>
</dbReference>
<dbReference type="GO" id="GO:0051085">
    <property type="term" value="P:chaperone cofactor-dependent protein refolding"/>
    <property type="evidence" value="ECO:0007669"/>
    <property type="project" value="TreeGrafter"/>
</dbReference>
<dbReference type="CDD" id="cd00320">
    <property type="entry name" value="cpn10"/>
    <property type="match status" value="1"/>
</dbReference>
<dbReference type="FunFam" id="2.30.33.40:FF:000001">
    <property type="entry name" value="10 kDa chaperonin"/>
    <property type="match status" value="1"/>
</dbReference>
<dbReference type="Gene3D" id="2.30.33.40">
    <property type="entry name" value="GroES chaperonin"/>
    <property type="match status" value="1"/>
</dbReference>
<dbReference type="HAMAP" id="MF_00580">
    <property type="entry name" value="CH10"/>
    <property type="match status" value="1"/>
</dbReference>
<dbReference type="InterPro" id="IPR020818">
    <property type="entry name" value="Chaperonin_GroES"/>
</dbReference>
<dbReference type="InterPro" id="IPR037124">
    <property type="entry name" value="Chaperonin_GroES_sf"/>
</dbReference>
<dbReference type="InterPro" id="IPR018369">
    <property type="entry name" value="Chaprnonin_Cpn10_CS"/>
</dbReference>
<dbReference type="InterPro" id="IPR011032">
    <property type="entry name" value="GroES-like_sf"/>
</dbReference>
<dbReference type="NCBIfam" id="NF001526">
    <property type="entry name" value="PRK00364.1-1"/>
    <property type="match status" value="1"/>
</dbReference>
<dbReference type="NCBIfam" id="NF001527">
    <property type="entry name" value="PRK00364.1-2"/>
    <property type="match status" value="1"/>
</dbReference>
<dbReference type="NCBIfam" id="NF001531">
    <property type="entry name" value="PRK00364.2-2"/>
    <property type="match status" value="1"/>
</dbReference>
<dbReference type="PANTHER" id="PTHR10772">
    <property type="entry name" value="10 KDA HEAT SHOCK PROTEIN"/>
    <property type="match status" value="1"/>
</dbReference>
<dbReference type="PANTHER" id="PTHR10772:SF58">
    <property type="entry name" value="CO-CHAPERONIN GROES"/>
    <property type="match status" value="1"/>
</dbReference>
<dbReference type="Pfam" id="PF00166">
    <property type="entry name" value="Cpn10"/>
    <property type="match status" value="1"/>
</dbReference>
<dbReference type="PRINTS" id="PR00297">
    <property type="entry name" value="CHAPERONIN10"/>
</dbReference>
<dbReference type="SMART" id="SM00883">
    <property type="entry name" value="Cpn10"/>
    <property type="match status" value="1"/>
</dbReference>
<dbReference type="SUPFAM" id="SSF50129">
    <property type="entry name" value="GroES-like"/>
    <property type="match status" value="1"/>
</dbReference>
<dbReference type="PROSITE" id="PS00681">
    <property type="entry name" value="CHAPERONINS_CPN10"/>
    <property type="match status" value="1"/>
</dbReference>
<gene>
    <name evidence="1" type="primary">groES</name>
    <name evidence="1" type="synonym">groS</name>
</gene>